<accession>B1KDX2</accession>
<feature type="chain" id="PRO_1000089476" description="Octanoyltransferase">
    <location>
        <begin position="1"/>
        <end position="219"/>
    </location>
</feature>
<feature type="domain" description="BPL/LPL catalytic" evidence="2">
    <location>
        <begin position="32"/>
        <end position="207"/>
    </location>
</feature>
<feature type="active site" description="Acyl-thioester intermediate" evidence="1">
    <location>
        <position position="169"/>
    </location>
</feature>
<feature type="binding site" evidence="1">
    <location>
        <begin position="71"/>
        <end position="78"/>
    </location>
    <ligand>
        <name>substrate</name>
    </ligand>
</feature>
<feature type="binding site" evidence="1">
    <location>
        <begin position="138"/>
        <end position="140"/>
    </location>
    <ligand>
        <name>substrate</name>
    </ligand>
</feature>
<feature type="binding site" evidence="1">
    <location>
        <begin position="151"/>
        <end position="153"/>
    </location>
    <ligand>
        <name>substrate</name>
    </ligand>
</feature>
<feature type="site" description="Lowers pKa of active site Cys" evidence="1">
    <location>
        <position position="135"/>
    </location>
</feature>
<proteinExistence type="inferred from homology"/>
<evidence type="ECO:0000255" key="1">
    <source>
        <dbReference type="HAMAP-Rule" id="MF_00013"/>
    </source>
</evidence>
<evidence type="ECO:0000255" key="2">
    <source>
        <dbReference type="PROSITE-ProRule" id="PRU01067"/>
    </source>
</evidence>
<dbReference type="EC" id="2.3.1.181" evidence="1"/>
<dbReference type="EMBL" id="CP000961">
    <property type="protein sequence ID" value="ACA87974.1"/>
    <property type="molecule type" value="Genomic_DNA"/>
</dbReference>
<dbReference type="RefSeq" id="WP_012326306.1">
    <property type="nucleotide sequence ID" value="NC_010506.1"/>
</dbReference>
<dbReference type="SMR" id="B1KDX2"/>
<dbReference type="STRING" id="392500.Swoo_3714"/>
<dbReference type="KEGG" id="swd:Swoo_3714"/>
<dbReference type="eggNOG" id="COG0321">
    <property type="taxonomic scope" value="Bacteria"/>
</dbReference>
<dbReference type="HOGENOM" id="CLU_035168_3_1_6"/>
<dbReference type="UniPathway" id="UPA00538">
    <property type="reaction ID" value="UER00592"/>
</dbReference>
<dbReference type="Proteomes" id="UP000002168">
    <property type="component" value="Chromosome"/>
</dbReference>
<dbReference type="GO" id="GO:0005737">
    <property type="term" value="C:cytoplasm"/>
    <property type="evidence" value="ECO:0007669"/>
    <property type="project" value="UniProtKB-SubCell"/>
</dbReference>
<dbReference type="GO" id="GO:0033819">
    <property type="term" value="F:lipoyl(octanoyl) transferase activity"/>
    <property type="evidence" value="ECO:0007669"/>
    <property type="project" value="UniProtKB-EC"/>
</dbReference>
<dbReference type="GO" id="GO:0036211">
    <property type="term" value="P:protein modification process"/>
    <property type="evidence" value="ECO:0007669"/>
    <property type="project" value="InterPro"/>
</dbReference>
<dbReference type="CDD" id="cd16444">
    <property type="entry name" value="LipB"/>
    <property type="match status" value="1"/>
</dbReference>
<dbReference type="FunFam" id="3.30.930.10:FF:000020">
    <property type="entry name" value="Octanoyltransferase"/>
    <property type="match status" value="1"/>
</dbReference>
<dbReference type="Gene3D" id="3.30.930.10">
    <property type="entry name" value="Bira Bifunctional Protein, Domain 2"/>
    <property type="match status" value="1"/>
</dbReference>
<dbReference type="HAMAP" id="MF_00013">
    <property type="entry name" value="LipB"/>
    <property type="match status" value="1"/>
</dbReference>
<dbReference type="InterPro" id="IPR045864">
    <property type="entry name" value="aa-tRNA-synth_II/BPL/LPL"/>
</dbReference>
<dbReference type="InterPro" id="IPR004143">
    <property type="entry name" value="BPL_LPL_catalytic"/>
</dbReference>
<dbReference type="InterPro" id="IPR000544">
    <property type="entry name" value="Octanoyltransferase"/>
</dbReference>
<dbReference type="InterPro" id="IPR020605">
    <property type="entry name" value="Octanoyltransferase_CS"/>
</dbReference>
<dbReference type="NCBIfam" id="TIGR00214">
    <property type="entry name" value="lipB"/>
    <property type="match status" value="1"/>
</dbReference>
<dbReference type="NCBIfam" id="NF010922">
    <property type="entry name" value="PRK14342.1"/>
    <property type="match status" value="1"/>
</dbReference>
<dbReference type="PANTHER" id="PTHR10993:SF7">
    <property type="entry name" value="LIPOYLTRANSFERASE 2, MITOCHONDRIAL-RELATED"/>
    <property type="match status" value="1"/>
</dbReference>
<dbReference type="PANTHER" id="PTHR10993">
    <property type="entry name" value="OCTANOYLTRANSFERASE"/>
    <property type="match status" value="1"/>
</dbReference>
<dbReference type="Pfam" id="PF21948">
    <property type="entry name" value="LplA-B_cat"/>
    <property type="match status" value="1"/>
</dbReference>
<dbReference type="PIRSF" id="PIRSF016262">
    <property type="entry name" value="LPLase"/>
    <property type="match status" value="1"/>
</dbReference>
<dbReference type="SUPFAM" id="SSF55681">
    <property type="entry name" value="Class II aaRS and biotin synthetases"/>
    <property type="match status" value="1"/>
</dbReference>
<dbReference type="PROSITE" id="PS51733">
    <property type="entry name" value="BPL_LPL_CATALYTIC"/>
    <property type="match status" value="1"/>
</dbReference>
<dbReference type="PROSITE" id="PS01313">
    <property type="entry name" value="LIPB"/>
    <property type="match status" value="1"/>
</dbReference>
<keyword id="KW-0012">Acyltransferase</keyword>
<keyword id="KW-0963">Cytoplasm</keyword>
<keyword id="KW-1185">Reference proteome</keyword>
<keyword id="KW-0808">Transferase</keyword>
<protein>
    <recommendedName>
        <fullName evidence="1">Octanoyltransferase</fullName>
        <ecNumber evidence="1">2.3.1.181</ecNumber>
    </recommendedName>
    <alternativeName>
        <fullName evidence="1">Lipoate-protein ligase B</fullName>
    </alternativeName>
    <alternativeName>
        <fullName evidence="1">Lipoyl/octanoyl transferase</fullName>
    </alternativeName>
    <alternativeName>
        <fullName evidence="1">Octanoyl-[acyl-carrier-protein]-protein N-octanoyltransferase</fullName>
    </alternativeName>
</protein>
<sequence length="219" mass="24494">MSESTLHVRYLGQQDYESVWHAMQEYTDNRDSSSPDQLWIVEHPPVFTQGQAGKSEHILNPGDIPVIQVDRGGQVTYHGPGQLVAYPLINIKRLKIGVRQLVTDIENSIVQMLENYQVKAYAKADAPGVYVDERKVASLGLRIRKGCSFHGLALNVDMDMSPFQRINPCGYAGLEMVQCKQLGGPQTVEEAGEQLVKTFSHNLGYQNLVHHQGLSQSYE</sequence>
<gene>
    <name evidence="1" type="primary">lipB</name>
    <name type="ordered locus">Swoo_3714</name>
</gene>
<name>LIPB_SHEWM</name>
<reference key="1">
    <citation type="submission" date="2008-02" db="EMBL/GenBank/DDBJ databases">
        <title>Complete sequence of Shewanella woodyi ATCC 51908.</title>
        <authorList>
            <consortium name="US DOE Joint Genome Institute"/>
            <person name="Copeland A."/>
            <person name="Lucas S."/>
            <person name="Lapidus A."/>
            <person name="Glavina del Rio T."/>
            <person name="Dalin E."/>
            <person name="Tice H."/>
            <person name="Bruce D."/>
            <person name="Goodwin L."/>
            <person name="Pitluck S."/>
            <person name="Sims D."/>
            <person name="Brettin T."/>
            <person name="Detter J.C."/>
            <person name="Han C."/>
            <person name="Kuske C.R."/>
            <person name="Schmutz J."/>
            <person name="Larimer F."/>
            <person name="Land M."/>
            <person name="Hauser L."/>
            <person name="Kyrpides N."/>
            <person name="Lykidis A."/>
            <person name="Zhao J.-S."/>
            <person name="Richardson P."/>
        </authorList>
    </citation>
    <scope>NUCLEOTIDE SEQUENCE [LARGE SCALE GENOMIC DNA]</scope>
    <source>
        <strain>ATCC 51908 / MS32</strain>
    </source>
</reference>
<comment type="function">
    <text evidence="1">Catalyzes the transfer of endogenously produced octanoic acid from octanoyl-acyl-carrier-protein onto the lipoyl domains of lipoate-dependent enzymes. Lipoyl-ACP can also act as a substrate although octanoyl-ACP is likely to be the physiological substrate.</text>
</comment>
<comment type="catalytic activity">
    <reaction evidence="1">
        <text>octanoyl-[ACP] + L-lysyl-[protein] = N(6)-octanoyl-L-lysyl-[protein] + holo-[ACP] + H(+)</text>
        <dbReference type="Rhea" id="RHEA:17665"/>
        <dbReference type="Rhea" id="RHEA-COMP:9636"/>
        <dbReference type="Rhea" id="RHEA-COMP:9685"/>
        <dbReference type="Rhea" id="RHEA-COMP:9752"/>
        <dbReference type="Rhea" id="RHEA-COMP:9928"/>
        <dbReference type="ChEBI" id="CHEBI:15378"/>
        <dbReference type="ChEBI" id="CHEBI:29969"/>
        <dbReference type="ChEBI" id="CHEBI:64479"/>
        <dbReference type="ChEBI" id="CHEBI:78463"/>
        <dbReference type="ChEBI" id="CHEBI:78809"/>
        <dbReference type="EC" id="2.3.1.181"/>
    </reaction>
</comment>
<comment type="pathway">
    <text evidence="1">Protein modification; protein lipoylation via endogenous pathway; protein N(6)-(lipoyl)lysine from octanoyl-[acyl-carrier-protein]: step 1/2.</text>
</comment>
<comment type="subcellular location">
    <subcellularLocation>
        <location evidence="1">Cytoplasm</location>
    </subcellularLocation>
</comment>
<comment type="miscellaneous">
    <text evidence="1">In the reaction, the free carboxyl group of octanoic acid is attached via an amide linkage to the epsilon-amino group of a specific lysine residue of lipoyl domains of lipoate-dependent enzymes.</text>
</comment>
<comment type="similarity">
    <text evidence="1">Belongs to the LipB family.</text>
</comment>
<organism>
    <name type="scientific">Shewanella woodyi (strain ATCC 51908 / MS32)</name>
    <dbReference type="NCBI Taxonomy" id="392500"/>
    <lineage>
        <taxon>Bacteria</taxon>
        <taxon>Pseudomonadati</taxon>
        <taxon>Pseudomonadota</taxon>
        <taxon>Gammaproteobacteria</taxon>
        <taxon>Alteromonadales</taxon>
        <taxon>Shewanellaceae</taxon>
        <taxon>Shewanella</taxon>
    </lineage>
</organism>